<gene>
    <name evidence="1" type="primary">yeaH</name>
    <name type="ordered locus">SNSL254_A1394</name>
</gene>
<proteinExistence type="inferred from homology"/>
<accession>B4T3X3</accession>
<reference key="1">
    <citation type="journal article" date="2011" name="J. Bacteriol.">
        <title>Comparative genomics of 28 Salmonella enterica isolates: evidence for CRISPR-mediated adaptive sublineage evolution.</title>
        <authorList>
            <person name="Fricke W.F."/>
            <person name="Mammel M.K."/>
            <person name="McDermott P.F."/>
            <person name="Tartera C."/>
            <person name="White D.G."/>
            <person name="Leclerc J.E."/>
            <person name="Ravel J."/>
            <person name="Cebula T.A."/>
        </authorList>
    </citation>
    <scope>NUCLEOTIDE SEQUENCE [LARGE SCALE GENOMIC DNA]</scope>
    <source>
        <strain>SL254</strain>
    </source>
</reference>
<sequence>MTWFIDRRLNGKNKSTVNRQRFLRRYKAQIKQSISEAINKRSVTDVDSGESVSIPTDDISEPMFHQGRGGLRHRVHPGNDHFIQNDRIERPQGGGGGGSGSGQGQASQDGEGQDEFVFQISKDEYLDLLFEDLALPNLKKNQHRQLNEYKTHRAGFTSNGVPANISVVRSLQNSLARRTAMTAGKRRELHALETELETISHSEPAQLLEEERLRREIAELRAKIERVPFIDTFDLRYKNYEKRPEPSSQAVMFCLMDVSGSMDQATKDMAKRFYILLYLFLSRTYKNVEVVYIRHHTQAKEVDEHEFFYSQETGGTIVSSALKLMDEVVKERYDPGQWNIYAAQASDGDNWADDSPLCHEILAKKLLPVVRYYSYIEITRRAHQTLWREYEHLQATFDNFAMQHIRDQEDIYPVFRELFQKQSANQSA</sequence>
<comment type="similarity">
    <text evidence="1">Belongs to the UPF0229 family.</text>
</comment>
<protein>
    <recommendedName>
        <fullName evidence="1">UPF0229 protein YeaH</fullName>
    </recommendedName>
</protein>
<dbReference type="EMBL" id="CP001113">
    <property type="protein sequence ID" value="ACF65169.1"/>
    <property type="molecule type" value="Genomic_DNA"/>
</dbReference>
<dbReference type="RefSeq" id="WP_000219714.1">
    <property type="nucleotide sequence ID" value="NZ_CCMR01000003.1"/>
</dbReference>
<dbReference type="SMR" id="B4T3X3"/>
<dbReference type="KEGG" id="see:SNSL254_A1394"/>
<dbReference type="HOGENOM" id="CLU_049702_0_0_6"/>
<dbReference type="Proteomes" id="UP000008824">
    <property type="component" value="Chromosome"/>
</dbReference>
<dbReference type="HAMAP" id="MF_01232">
    <property type="entry name" value="UPF0229"/>
    <property type="match status" value="1"/>
</dbReference>
<dbReference type="InterPro" id="IPR006698">
    <property type="entry name" value="UPF0229"/>
</dbReference>
<dbReference type="NCBIfam" id="NF003707">
    <property type="entry name" value="PRK05325.1-2"/>
    <property type="match status" value="1"/>
</dbReference>
<dbReference type="NCBIfam" id="NF003708">
    <property type="entry name" value="PRK05325.1-3"/>
    <property type="match status" value="1"/>
</dbReference>
<dbReference type="PANTHER" id="PTHR30510">
    <property type="entry name" value="UPF0229 PROTEIN YEAH"/>
    <property type="match status" value="1"/>
</dbReference>
<dbReference type="PANTHER" id="PTHR30510:SF2">
    <property type="entry name" value="UPF0229 PROTEIN YEAH"/>
    <property type="match status" value="1"/>
</dbReference>
<dbReference type="Pfam" id="PF04285">
    <property type="entry name" value="DUF444"/>
    <property type="match status" value="1"/>
</dbReference>
<feature type="chain" id="PRO_1000139656" description="UPF0229 protein YeaH">
    <location>
        <begin position="1"/>
        <end position="428"/>
    </location>
</feature>
<feature type="region of interest" description="Disordered" evidence="2">
    <location>
        <begin position="78"/>
        <end position="111"/>
    </location>
</feature>
<feature type="compositionally biased region" description="Basic and acidic residues" evidence="2">
    <location>
        <begin position="78"/>
        <end position="90"/>
    </location>
</feature>
<feature type="compositionally biased region" description="Gly residues" evidence="2">
    <location>
        <begin position="92"/>
        <end position="103"/>
    </location>
</feature>
<evidence type="ECO:0000255" key="1">
    <source>
        <dbReference type="HAMAP-Rule" id="MF_01232"/>
    </source>
</evidence>
<evidence type="ECO:0000256" key="2">
    <source>
        <dbReference type="SAM" id="MobiDB-lite"/>
    </source>
</evidence>
<organism>
    <name type="scientific">Salmonella newport (strain SL254)</name>
    <dbReference type="NCBI Taxonomy" id="423368"/>
    <lineage>
        <taxon>Bacteria</taxon>
        <taxon>Pseudomonadati</taxon>
        <taxon>Pseudomonadota</taxon>
        <taxon>Gammaproteobacteria</taxon>
        <taxon>Enterobacterales</taxon>
        <taxon>Enterobacteriaceae</taxon>
        <taxon>Salmonella</taxon>
    </lineage>
</organism>
<name>YEAH_SALNS</name>